<keyword id="KW-0004">4Fe-4S</keyword>
<keyword id="KW-0408">Iron</keyword>
<keyword id="KW-0411">Iron-sulfur</keyword>
<keyword id="KW-0414">Isoprene biosynthesis</keyword>
<keyword id="KW-0456">Lyase</keyword>
<keyword id="KW-0479">Metal-binding</keyword>
<keyword id="KW-1185">Reference proteome</keyword>
<reference key="1">
    <citation type="journal article" date="1999" name="DNA Res.">
        <title>Complete genome sequence of an aerobic hyper-thermophilic crenarchaeon, Aeropyrum pernix K1.</title>
        <authorList>
            <person name="Kawarabayasi Y."/>
            <person name="Hino Y."/>
            <person name="Horikawa H."/>
            <person name="Yamazaki S."/>
            <person name="Haikawa Y."/>
            <person name="Jin-no K."/>
            <person name="Takahashi M."/>
            <person name="Sekine M."/>
            <person name="Baba S."/>
            <person name="Ankai A."/>
            <person name="Kosugi H."/>
            <person name="Hosoyama A."/>
            <person name="Fukui S."/>
            <person name="Nagai Y."/>
            <person name="Nishijima K."/>
            <person name="Nakazawa H."/>
            <person name="Takamiya M."/>
            <person name="Masuda S."/>
            <person name="Funahashi T."/>
            <person name="Tanaka T."/>
            <person name="Kudoh Y."/>
            <person name="Yamazaki J."/>
            <person name="Kushida N."/>
            <person name="Oguchi A."/>
            <person name="Aoki K."/>
            <person name="Kubota K."/>
            <person name="Nakamura Y."/>
            <person name="Nomura N."/>
            <person name="Sako Y."/>
            <person name="Kikuchi H."/>
        </authorList>
    </citation>
    <scope>NUCLEOTIDE SEQUENCE [LARGE SCALE GENOMIC DNA]</scope>
    <source>
        <strain>ATCC 700893 / DSM 11879 / JCM 9820 / NBRC 100138 / K1</strain>
    </source>
</reference>
<reference key="2">
    <citation type="journal article" date="2018" name="Proc. Natl. Acad. Sci. U.S.A.">
        <title>Modified mevalonate pathway of the archaeon Aeropyrum pernix proceeds via trans-anhydromevalonate 5-phosphate.</title>
        <authorList>
            <person name="Hayakawa H."/>
            <person name="Motoyama K."/>
            <person name="Sobue F."/>
            <person name="Ito T."/>
            <person name="Kawaide H."/>
            <person name="Yoshimura T."/>
            <person name="Hemmi H."/>
        </authorList>
    </citation>
    <scope>FUNCTION</scope>
    <scope>CATALYTIC ACTIVITY</scope>
    <scope>COFACTOR</scope>
    <scope>PATHWAY</scope>
    <scope>SUBUNIT</scope>
</reference>
<reference key="3">
    <citation type="journal article" date="2020" name="Appl. Environ. Microbiol.">
        <title>Reconstruction of the 'Archaeal' Mevalonate Pathway from the Methanogenic Archaeon Methanosarcina mazei in Escherichia coli Cells.</title>
        <authorList>
            <person name="Yoshida R."/>
            <person name="Yoshimura T."/>
            <person name="Hemmi H."/>
        </authorList>
    </citation>
    <scope>FUNCTION</scope>
    <scope>PATHWAY</scope>
</reference>
<reference key="4">
    <citation type="journal article" date="2023" name="Front. Microbiol.">
        <title>A [4Fe-4S] cluster resides at the active center of phosphomevalonate dehydratase, a key enzyme in the archaeal modified mevalonate pathway.</title>
        <authorList>
            <person name="Komeyama M."/>
            <person name="Kanno K."/>
            <person name="Mino H."/>
            <person name="Yasuno Y."/>
            <person name="Shinada T."/>
            <person name="Ito T."/>
            <person name="Hemmi H."/>
        </authorList>
    </citation>
    <scope>FUNCTION</scope>
    <scope>CATALYTIC ACTIVITY</scope>
    <scope>COFACTOR</scope>
    <scope>ACTIVITY REGULATION</scope>
    <scope>BIOPHYSICOCHEMICAL PROPERTIES</scope>
    <scope>SUBUNIT</scope>
    <scope>MUTAGENESIS OF CYS-122; GLU-145; CYS-297 AND CYS-356</scope>
</reference>
<feature type="chain" id="PRO_0000460843" description="Phosphomevalonate dehydratase large subunit">
    <location>
        <begin position="1"/>
        <end position="402"/>
    </location>
</feature>
<feature type="binding site" evidence="1">
    <location>
        <position position="48"/>
    </location>
    <ligand>
        <name>(R)-5-phosphomevalonate</name>
        <dbReference type="ChEBI" id="CHEBI:58146"/>
    </ligand>
</feature>
<feature type="binding site" evidence="1">
    <location>
        <position position="49"/>
    </location>
    <ligand>
        <name>(R)-5-phosphomevalonate</name>
        <dbReference type="ChEBI" id="CHEBI:58146"/>
    </ligand>
</feature>
<feature type="binding site" evidence="1">
    <location>
        <position position="50"/>
    </location>
    <ligand>
        <name>(R)-5-phosphomevalonate</name>
        <dbReference type="ChEBI" id="CHEBI:58146"/>
    </ligand>
</feature>
<feature type="binding site" evidence="1">
    <location>
        <position position="79"/>
    </location>
    <ligand>
        <name>(R)-5-phosphomevalonate</name>
        <dbReference type="ChEBI" id="CHEBI:58146"/>
    </ligand>
</feature>
<feature type="binding site" evidence="1">
    <location>
        <position position="80"/>
    </location>
    <ligand>
        <name>(R)-5-phosphomevalonate</name>
        <dbReference type="ChEBI" id="CHEBI:58146"/>
    </ligand>
</feature>
<feature type="binding site" evidence="9">
    <location>
        <position position="122"/>
    </location>
    <ligand>
        <name>[4Fe-4S] cluster</name>
        <dbReference type="ChEBI" id="CHEBI:49883"/>
    </ligand>
</feature>
<feature type="binding site" evidence="1">
    <location>
        <position position="145"/>
    </location>
    <ligand>
        <name>(R)-5-phosphomevalonate</name>
        <dbReference type="ChEBI" id="CHEBI:58146"/>
    </ligand>
</feature>
<feature type="binding site" evidence="1">
    <location>
        <position position="146"/>
    </location>
    <ligand>
        <name>(R)-5-phosphomevalonate</name>
        <dbReference type="ChEBI" id="CHEBI:58146"/>
    </ligand>
</feature>
<feature type="binding site" evidence="9">
    <location>
        <position position="297"/>
    </location>
    <ligand>
        <name>[4Fe-4S] cluster</name>
        <dbReference type="ChEBI" id="CHEBI:49883"/>
    </ligand>
</feature>
<feature type="binding site" evidence="9">
    <location>
        <position position="356"/>
    </location>
    <ligand>
        <name>[4Fe-4S] cluster</name>
        <dbReference type="ChEBI" id="CHEBI:49883"/>
    </ligand>
</feature>
<feature type="binding site" evidence="1">
    <location>
        <position position="377"/>
    </location>
    <ligand>
        <name>(R)-5-phosphomevalonate</name>
        <dbReference type="ChEBI" id="CHEBI:58146"/>
    </ligand>
</feature>
<feature type="mutagenesis site" description="Almost loss of activity." evidence="4">
    <original>C</original>
    <variation>A</variation>
    <location>
        <position position="122"/>
    </location>
</feature>
<feature type="mutagenesis site" description="Retains 76% of wild-type activity." evidence="4">
    <original>E</original>
    <variation>A</variation>
    <location>
        <position position="145"/>
    </location>
</feature>
<feature type="mutagenesis site" description="Almost loss of activity." evidence="4">
    <original>C</original>
    <variation>A</variation>
    <location>
        <position position="297"/>
    </location>
</feature>
<feature type="mutagenesis site" description="Almost loss of activity." evidence="4">
    <original>C</original>
    <variation>A</variation>
    <location>
        <position position="356"/>
    </location>
</feature>
<accession>Q9YA51</accession>
<sequence>MYLTREEERILAGEEGEARAKALEVIVKVGEAVGAERLIPIKHAHVSGASYMTIGDAGLRFLARLAESGARFSVPTTVNPVSYDVEEPGAIPMTRLSPRIVKAQSEILKALEAMGADLILTCTPYYTEVPRRVGLREGDSVAWGESSAVAYANSVLGIHTNREGGPLALMAGIAGRTYFYGAHDPEWRKPRVAYRLETPKVLDETEAGVLGEVIATQHRDEHPPLLDAPLGGEAALKEFSAAVGSAGSLAMVHITGVTPGDPGDMIEEVVTMDYGDLARRMEDLAPGFEPDILYVGCPHASIEELRRLYRALSKAGERAGRRTVVSISRSLYLQALREGLVEKLKGLGVRFVRDSCLIVSPFSSGARGVRVATNSYKAYFYLSKKGVEVGLAPIEALPKLVS</sequence>
<comment type="function">
    <text evidence="2 3 4">Component of a hydro-lyase that catalyzes the dehydration of mevalonate 5-phosphate (MVA5P) to form trans-anhydromevalonate 5-phosphate (tAHMP) (PubMed:30224495, PubMed:36992929). Involved in the archaeal mevalonate (MVA) pathway, which provides fundamental precursors for isoprenoid biosynthesis, such as isopentenyl diphosphate (IPP) and dimethylallyl diphosphate (DMAPP) (PubMed:30224495, PubMed:31924615).</text>
</comment>
<comment type="catalytic activity">
    <reaction evidence="2 4">
        <text>(R)-5-phosphomevalonate = (2E)-3-methyl-5-phosphooxypent-2-enoate + H2O</text>
        <dbReference type="Rhea" id="RHEA:78975"/>
        <dbReference type="ChEBI" id="CHEBI:15377"/>
        <dbReference type="ChEBI" id="CHEBI:58146"/>
        <dbReference type="ChEBI" id="CHEBI:229665"/>
        <dbReference type="EC" id="4.2.1.182"/>
    </reaction>
    <physiologicalReaction direction="left-to-right" evidence="2">
        <dbReference type="Rhea" id="RHEA:78976"/>
    </physiologicalReaction>
</comment>
<comment type="cofactor">
    <cofactor evidence="4 8">
        <name>[4Fe-4S] cluster</name>
        <dbReference type="ChEBI" id="CHEBI:49883"/>
    </cofactor>
    <text evidence="4">Binds 1 [4Fe-4S] cluster per subunit.</text>
</comment>
<comment type="activity regulation">
    <text evidence="4">Neither the addition of 1 mM Mg(2+) nor 1 mM Mn(2+) has a significant effect on the activity, whereas Zn(2+) causes almost complete inactivation (PubMed:36992929). Strongly inhibited by H(2)O(2), but not by EDTA or iodoacetamide (PubMed:36992929).</text>
</comment>
<comment type="biophysicochemical properties">
    <kinetics>
        <KM evidence="4">18.3 uM for tAHMP</KM>
        <text evidence="4">kcat is 15.2 sec(-1) with tAHMP as substrate.</text>
    </kinetics>
    <phDependence>
        <text evidence="4">Optimum pH is 7.0.</text>
    </phDependence>
    <temperatureDependence>
        <text evidence="4">Thermostable (PubMed:36992929). Treatment at 90 degrees Celsius causes a loss of most activity, and treatment at 100 degrees Celsius results in complete inactivation (PubMed:36992929).</text>
    </temperatureDependence>
</comment>
<comment type="pathway">
    <text evidence="3 8">Isoprenoid biosynthesis; isopentenyl diphosphate biosynthesis via mevalonate pathway.</text>
</comment>
<comment type="subunit">
    <text evidence="2 4">Heterodimer composed of a large subunit (PMDh-L) and a small subunit (PMDh-S).</text>
</comment>
<comment type="similarity">
    <text evidence="7">Belongs to the AcnX type II large subunit family.</text>
</comment>
<gene>
    <name evidence="10" type="ordered locus">APE_2087.1</name>
</gene>
<proteinExistence type="evidence at protein level"/>
<organism>
    <name type="scientific">Aeropyrum pernix (strain ATCC 700893 / DSM 11879 / JCM 9820 / NBRC 100138 / K1)</name>
    <dbReference type="NCBI Taxonomy" id="272557"/>
    <lineage>
        <taxon>Archaea</taxon>
        <taxon>Thermoproteota</taxon>
        <taxon>Thermoprotei</taxon>
        <taxon>Desulfurococcales</taxon>
        <taxon>Desulfurococcaceae</taxon>
        <taxon>Aeropyrum</taxon>
    </lineage>
</organism>
<protein>
    <recommendedName>
        <fullName evidence="6">Phosphomevalonate dehydratase large subunit</fullName>
        <shortName evidence="6">PMDh large subunit</shortName>
        <shortName evidence="6">PMDh-L</shortName>
        <ecNumber evidence="2 4">4.2.1.182</ecNumber>
    </recommendedName>
    <alternativeName>
        <fullName evidence="5">ApeAcnX large subunit</fullName>
    </alternativeName>
    <alternativeName>
        <fullName evidence="5">Mevalonate 5-phosphate dehydratase large subunit</fullName>
        <shortName evidence="5">MVA5P dehydratase large subunit</shortName>
    </alternativeName>
</protein>
<dbReference type="EC" id="4.2.1.182" evidence="2 4"/>
<dbReference type="EMBL" id="BA000002">
    <property type="protein sequence ID" value="BAA81098.2"/>
    <property type="molecule type" value="Genomic_DNA"/>
</dbReference>
<dbReference type="PIR" id="B72514">
    <property type="entry name" value="B72514"/>
</dbReference>
<dbReference type="RefSeq" id="WP_010866787.1">
    <property type="nucleotide sequence ID" value="NC_000854.2"/>
</dbReference>
<dbReference type="SMR" id="Q9YA51"/>
<dbReference type="STRING" id="272557.APE_2087.1"/>
<dbReference type="DNASU" id="1445183"/>
<dbReference type="EnsemblBacteria" id="BAA81098">
    <property type="protein sequence ID" value="BAA81098"/>
    <property type="gene ID" value="APE_2087.1"/>
</dbReference>
<dbReference type="GeneID" id="1445183"/>
<dbReference type="KEGG" id="ape:APE_2087.1"/>
<dbReference type="PATRIC" id="fig|272557.25.peg.1392"/>
<dbReference type="eggNOG" id="arCOG04278">
    <property type="taxonomic scope" value="Archaea"/>
</dbReference>
<dbReference type="BioCyc" id="MetaCyc:MONOMER-21119"/>
<dbReference type="UniPathway" id="UPA00057"/>
<dbReference type="Proteomes" id="UP000002518">
    <property type="component" value="Chromosome"/>
</dbReference>
<dbReference type="GO" id="GO:0051539">
    <property type="term" value="F:4 iron, 4 sulfur cluster binding"/>
    <property type="evidence" value="ECO:0007669"/>
    <property type="project" value="UniProtKB-KW"/>
</dbReference>
<dbReference type="GO" id="GO:0016829">
    <property type="term" value="F:lyase activity"/>
    <property type="evidence" value="ECO:0007669"/>
    <property type="project" value="UniProtKB-KW"/>
</dbReference>
<dbReference type="GO" id="GO:0046872">
    <property type="term" value="F:metal ion binding"/>
    <property type="evidence" value="ECO:0007669"/>
    <property type="project" value="UniProtKB-KW"/>
</dbReference>
<dbReference type="GO" id="GO:0008299">
    <property type="term" value="P:isoprenoid biosynthetic process"/>
    <property type="evidence" value="ECO:0007669"/>
    <property type="project" value="UniProtKB-KW"/>
</dbReference>
<dbReference type="CDD" id="cd01355">
    <property type="entry name" value="AcnX"/>
    <property type="match status" value="1"/>
</dbReference>
<dbReference type="InterPro" id="IPR007506">
    <property type="entry name" value="PMDh-L-like_dom"/>
</dbReference>
<dbReference type="PANTHER" id="PTHR36577">
    <property type="entry name" value="DUF521 DOMAIN PROTEIN (AFU_ORTHOLOGUE AFUA_6G00490)"/>
    <property type="match status" value="1"/>
</dbReference>
<dbReference type="PANTHER" id="PTHR36577:SF3">
    <property type="entry name" value="DUF521 DOMAIN PROTEIN (AFU_ORTHOLOGUE AFUA_6G00490)"/>
    <property type="match status" value="1"/>
</dbReference>
<dbReference type="Pfam" id="PF04412">
    <property type="entry name" value="AcnX"/>
    <property type="match status" value="1"/>
</dbReference>
<name>PMDHL_AERPE</name>
<evidence type="ECO:0000250" key="1">
    <source>
        <dbReference type="UniProtKB" id="Q5JGJ6"/>
    </source>
</evidence>
<evidence type="ECO:0000269" key="2">
    <source>
    </source>
</evidence>
<evidence type="ECO:0000269" key="3">
    <source>
    </source>
</evidence>
<evidence type="ECO:0000269" key="4">
    <source>
    </source>
</evidence>
<evidence type="ECO:0000303" key="5">
    <source>
    </source>
</evidence>
<evidence type="ECO:0000303" key="6">
    <source>
    </source>
</evidence>
<evidence type="ECO:0000305" key="7"/>
<evidence type="ECO:0000305" key="8">
    <source>
    </source>
</evidence>
<evidence type="ECO:0000305" key="9">
    <source>
    </source>
</evidence>
<evidence type="ECO:0000312" key="10">
    <source>
        <dbReference type="EMBL" id="BAA81098.2"/>
    </source>
</evidence>